<sequence length="192" mass="21424">MQAIKCVVVGDGAVGKTCLLISYTTNAFPGEYIPTVFDNYSANVMVDSKPVNLGLWDTAGQEDYDRLRPLSYPQTDVFLICFSLVSPASYENVRAKWFPEVRHHCPSTPIILVGTKLDLRDDKDTIEKLKEKKLAPITYPQGLALAKEIDSVKYLECSALTQRGLKTVFDEAIRAVLCPQPTRPQKRPCSIL</sequence>
<dbReference type="EC" id="3.6.5.2" evidence="2"/>
<dbReference type="EMBL" id="AF175263">
    <property type="protein sequence ID" value="AAF00715.1"/>
    <property type="molecule type" value="mRNA"/>
</dbReference>
<dbReference type="EMBL" id="BC102255">
    <property type="protein sequence ID" value="AAI02256.1"/>
    <property type="molecule type" value="mRNA"/>
</dbReference>
<dbReference type="RefSeq" id="NP_786986.1">
    <property type="nucleotide sequence ID" value="NM_175792.2"/>
</dbReference>
<dbReference type="SMR" id="Q9TU25"/>
<dbReference type="FunCoup" id="Q9TU25">
    <property type="interactions" value="1862"/>
</dbReference>
<dbReference type="STRING" id="9913.ENSBTAP00000014666"/>
<dbReference type="PaxDb" id="9913-ENSBTAP00000014666"/>
<dbReference type="PeptideAtlas" id="Q9TU25"/>
<dbReference type="Ensembl" id="ENSBTAT00000014666.6">
    <property type="protein sequence ID" value="ENSBTAP00000014666.5"/>
    <property type="gene ID" value="ENSBTAG00000011043.7"/>
</dbReference>
<dbReference type="GeneID" id="327671"/>
<dbReference type="KEGG" id="bta:327671"/>
<dbReference type="CTD" id="5880"/>
<dbReference type="VEuPathDB" id="HostDB:ENSBTAG00000011043"/>
<dbReference type="VGNC" id="VGNC:49061">
    <property type="gene designation" value="RAC2"/>
</dbReference>
<dbReference type="eggNOG" id="KOG0393">
    <property type="taxonomic scope" value="Eukaryota"/>
</dbReference>
<dbReference type="GeneTree" id="ENSGT00940000155205"/>
<dbReference type="HOGENOM" id="CLU_041217_21_3_1"/>
<dbReference type="InParanoid" id="Q9TU25"/>
<dbReference type="OMA" id="ECSAKDK"/>
<dbReference type="OrthoDB" id="8830751at2759"/>
<dbReference type="TreeFam" id="TF101109"/>
<dbReference type="Reactome" id="R-BTA-114604">
    <property type="pathway name" value="GPVI-mediated activation cascade"/>
</dbReference>
<dbReference type="Reactome" id="R-BTA-1222556">
    <property type="pathway name" value="ROS and RNS production in phagocytes"/>
</dbReference>
<dbReference type="Reactome" id="R-BTA-1257604">
    <property type="pathway name" value="PIP3 activates AKT signaling"/>
</dbReference>
<dbReference type="Reactome" id="R-BTA-4086400">
    <property type="pathway name" value="PCP/CE pathway"/>
</dbReference>
<dbReference type="Reactome" id="R-BTA-5668599">
    <property type="pathway name" value="RHO GTPases Activate NADPH Oxidases"/>
</dbReference>
<dbReference type="Reactome" id="R-BTA-6811558">
    <property type="pathway name" value="PI5P, PP2A and IER3 Regulate PI3K/AKT Signaling"/>
</dbReference>
<dbReference type="Reactome" id="R-BTA-9013404">
    <property type="pathway name" value="RAC2 GTPase cycle"/>
</dbReference>
<dbReference type="Proteomes" id="UP000009136">
    <property type="component" value="Chromosome 5"/>
</dbReference>
<dbReference type="Bgee" id="ENSBTAG00000011043">
    <property type="expression patterns" value="Expressed in blood and 103 other cell types or tissues"/>
</dbReference>
<dbReference type="GO" id="GO:0042995">
    <property type="term" value="C:cell projection"/>
    <property type="evidence" value="ECO:0000318"/>
    <property type="project" value="GO_Central"/>
</dbReference>
<dbReference type="GO" id="GO:0031410">
    <property type="term" value="C:cytoplasmic vesicle"/>
    <property type="evidence" value="ECO:0000318"/>
    <property type="project" value="GO_Central"/>
</dbReference>
<dbReference type="GO" id="GO:0005856">
    <property type="term" value="C:cytoskeleton"/>
    <property type="evidence" value="ECO:0000318"/>
    <property type="project" value="GO_Central"/>
</dbReference>
<dbReference type="GO" id="GO:0005886">
    <property type="term" value="C:plasma membrane"/>
    <property type="evidence" value="ECO:0000318"/>
    <property type="project" value="GO_Central"/>
</dbReference>
<dbReference type="GO" id="GO:0005525">
    <property type="term" value="F:GTP binding"/>
    <property type="evidence" value="ECO:0000318"/>
    <property type="project" value="GO_Central"/>
</dbReference>
<dbReference type="GO" id="GO:0003924">
    <property type="term" value="F:GTPase activity"/>
    <property type="evidence" value="ECO:0000318"/>
    <property type="project" value="GO_Central"/>
</dbReference>
<dbReference type="GO" id="GO:0019901">
    <property type="term" value="F:protein kinase binding"/>
    <property type="evidence" value="ECO:0000318"/>
    <property type="project" value="GO_Central"/>
</dbReference>
<dbReference type="GO" id="GO:0007015">
    <property type="term" value="P:actin filament organization"/>
    <property type="evidence" value="ECO:0000318"/>
    <property type="project" value="GO_Central"/>
</dbReference>
<dbReference type="GO" id="GO:0006935">
    <property type="term" value="P:chemotaxis"/>
    <property type="evidence" value="ECO:0000318"/>
    <property type="project" value="GO_Central"/>
</dbReference>
<dbReference type="GO" id="GO:0030865">
    <property type="term" value="P:cortical cytoskeleton organization"/>
    <property type="evidence" value="ECO:0000318"/>
    <property type="project" value="GO_Central"/>
</dbReference>
<dbReference type="GO" id="GO:0007163">
    <property type="term" value="P:establishment or maintenance of cell polarity"/>
    <property type="evidence" value="ECO:0000318"/>
    <property type="project" value="GO_Central"/>
</dbReference>
<dbReference type="GO" id="GO:0010592">
    <property type="term" value="P:positive regulation of lamellipodium assembly"/>
    <property type="evidence" value="ECO:0000318"/>
    <property type="project" value="GO_Central"/>
</dbReference>
<dbReference type="GO" id="GO:0032956">
    <property type="term" value="P:regulation of actin cytoskeleton organization"/>
    <property type="evidence" value="ECO:0000318"/>
    <property type="project" value="GO_Central"/>
</dbReference>
<dbReference type="GO" id="GO:0008360">
    <property type="term" value="P:regulation of cell shape"/>
    <property type="evidence" value="ECO:0000318"/>
    <property type="project" value="GO_Central"/>
</dbReference>
<dbReference type="GO" id="GO:1902622">
    <property type="term" value="P:regulation of neutrophil migration"/>
    <property type="evidence" value="ECO:0000318"/>
    <property type="project" value="GO_Central"/>
</dbReference>
<dbReference type="GO" id="GO:0007165">
    <property type="term" value="P:signal transduction"/>
    <property type="evidence" value="ECO:0000318"/>
    <property type="project" value="GO_Central"/>
</dbReference>
<dbReference type="GO" id="GO:0007264">
    <property type="term" value="P:small GTPase-mediated signal transduction"/>
    <property type="evidence" value="ECO:0007669"/>
    <property type="project" value="InterPro"/>
</dbReference>
<dbReference type="CDD" id="cd01871">
    <property type="entry name" value="Rac1_like"/>
    <property type="match status" value="1"/>
</dbReference>
<dbReference type="FunFam" id="3.40.50.300:FF:000088">
    <property type="entry name" value="Ras-related C3 botulinum toxin substrate 1"/>
    <property type="match status" value="1"/>
</dbReference>
<dbReference type="Gene3D" id="3.40.50.300">
    <property type="entry name" value="P-loop containing nucleotide triphosphate hydrolases"/>
    <property type="match status" value="1"/>
</dbReference>
<dbReference type="InterPro" id="IPR027417">
    <property type="entry name" value="P-loop_NTPase"/>
</dbReference>
<dbReference type="InterPro" id="IPR005225">
    <property type="entry name" value="Small_GTP-bd"/>
</dbReference>
<dbReference type="InterPro" id="IPR001806">
    <property type="entry name" value="Small_GTPase"/>
</dbReference>
<dbReference type="InterPro" id="IPR003578">
    <property type="entry name" value="Small_GTPase_Rho"/>
</dbReference>
<dbReference type="NCBIfam" id="TIGR00231">
    <property type="entry name" value="small_GTP"/>
    <property type="match status" value="1"/>
</dbReference>
<dbReference type="PANTHER" id="PTHR24072">
    <property type="entry name" value="RHO FAMILY GTPASE"/>
    <property type="match status" value="1"/>
</dbReference>
<dbReference type="Pfam" id="PF00071">
    <property type="entry name" value="Ras"/>
    <property type="match status" value="1"/>
</dbReference>
<dbReference type="PRINTS" id="PR00449">
    <property type="entry name" value="RASTRNSFRMNG"/>
</dbReference>
<dbReference type="SMART" id="SM00175">
    <property type="entry name" value="RAB"/>
    <property type="match status" value="1"/>
</dbReference>
<dbReference type="SMART" id="SM00176">
    <property type="entry name" value="RAN"/>
    <property type="match status" value="1"/>
</dbReference>
<dbReference type="SMART" id="SM00173">
    <property type="entry name" value="RAS"/>
    <property type="match status" value="1"/>
</dbReference>
<dbReference type="SMART" id="SM00174">
    <property type="entry name" value="RHO"/>
    <property type="match status" value="1"/>
</dbReference>
<dbReference type="SUPFAM" id="SSF52540">
    <property type="entry name" value="P-loop containing nucleoside triphosphate hydrolases"/>
    <property type="match status" value="1"/>
</dbReference>
<dbReference type="PROSITE" id="PS51420">
    <property type="entry name" value="RHO"/>
    <property type="match status" value="1"/>
</dbReference>
<keyword id="KW-0007">Acetylation</keyword>
<keyword id="KW-0963">Cytoplasm</keyword>
<keyword id="KW-0342">GTP-binding</keyword>
<keyword id="KW-0378">Hydrolase</keyword>
<keyword id="KW-0449">Lipoprotein</keyword>
<keyword id="KW-0472">Membrane</keyword>
<keyword id="KW-0488">Methylation</keyword>
<keyword id="KW-0547">Nucleotide-binding</keyword>
<keyword id="KW-0636">Prenylation</keyword>
<keyword id="KW-1185">Reference proteome</keyword>
<proteinExistence type="evidence at transcript level"/>
<protein>
    <recommendedName>
        <fullName evidence="2">Ras-related C3 botulinum toxin substrate 2</fullName>
        <ecNumber evidence="2">3.6.5.2</ecNumber>
    </recommendedName>
    <alternativeName>
        <fullName>p21-Rac2</fullName>
    </alternativeName>
</protein>
<accession>Q9TU25</accession>
<accession>Q3T0U8</accession>
<organism>
    <name type="scientific">Bos taurus</name>
    <name type="common">Bovine</name>
    <dbReference type="NCBI Taxonomy" id="9913"/>
    <lineage>
        <taxon>Eukaryota</taxon>
        <taxon>Metazoa</taxon>
        <taxon>Chordata</taxon>
        <taxon>Craniata</taxon>
        <taxon>Vertebrata</taxon>
        <taxon>Euteleostomi</taxon>
        <taxon>Mammalia</taxon>
        <taxon>Eutheria</taxon>
        <taxon>Laurasiatheria</taxon>
        <taxon>Artiodactyla</taxon>
        <taxon>Ruminantia</taxon>
        <taxon>Pecora</taxon>
        <taxon>Bovidae</taxon>
        <taxon>Bovinae</taxon>
        <taxon>Bos</taxon>
    </lineage>
</organism>
<feature type="chain" id="PRO_0000042042" description="Ras-related C3 botulinum toxin substrate 2">
    <location>
        <begin position="1"/>
        <end position="189"/>
    </location>
</feature>
<feature type="propeptide" id="PRO_0000042043" description="Removed in mature form" evidence="1">
    <location>
        <begin position="190"/>
        <end position="192"/>
    </location>
</feature>
<feature type="short sequence motif" description="Effector region" evidence="4">
    <location>
        <begin position="32"/>
        <end position="40"/>
    </location>
</feature>
<feature type="binding site" evidence="1">
    <location>
        <begin position="10"/>
        <end position="17"/>
    </location>
    <ligand>
        <name>GTP</name>
        <dbReference type="ChEBI" id="CHEBI:37565"/>
    </ligand>
</feature>
<feature type="binding site" evidence="1">
    <location>
        <begin position="57"/>
        <end position="61"/>
    </location>
    <ligand>
        <name>GTP</name>
        <dbReference type="ChEBI" id="CHEBI:37565"/>
    </ligand>
</feature>
<feature type="binding site" evidence="1">
    <location>
        <begin position="115"/>
        <end position="118"/>
    </location>
    <ligand>
        <name>GTP</name>
        <dbReference type="ChEBI" id="CHEBI:37565"/>
    </ligand>
</feature>
<feature type="modified residue" description="N6-acetyllysine" evidence="2">
    <location>
        <position position="147"/>
    </location>
</feature>
<feature type="modified residue" description="Cysteine methyl ester" evidence="1">
    <location>
        <position position="189"/>
    </location>
</feature>
<feature type="lipid moiety-binding region" description="S-geranylgeranyl cysteine" evidence="1">
    <location>
        <position position="189"/>
    </location>
</feature>
<reference key="1">
    <citation type="journal article" date="2000" name="Vet. Immunol. Immunopathol.">
        <title>Cloning of bovine low molecular weight GTPases (Rac1 and Rac2) and Rho GDP-dissociation inhibitor 2 (D4-GDI).</title>
        <authorList>
            <person name="Davis A.R."/>
            <person name="Clements M.K."/>
            <person name="Bunger P.L."/>
            <person name="Siemsen D.W."/>
            <person name="Quinn M.T."/>
        </authorList>
    </citation>
    <scope>NUCLEOTIDE SEQUENCE [MRNA]</scope>
</reference>
<reference key="2">
    <citation type="submission" date="2005-08" db="EMBL/GenBank/DDBJ databases">
        <authorList>
            <consortium name="NIH - Mammalian Gene Collection (MGC) project"/>
        </authorList>
    </citation>
    <scope>NUCLEOTIDE SEQUENCE [LARGE SCALE MRNA]</scope>
    <source>
        <strain>Crossbred X Angus</strain>
        <tissue>Ileum</tissue>
    </source>
</reference>
<evidence type="ECO:0000250" key="1"/>
<evidence type="ECO:0000250" key="2">
    <source>
        <dbReference type="UniProtKB" id="P15153"/>
    </source>
</evidence>
<evidence type="ECO:0000250" key="3">
    <source>
        <dbReference type="UniProtKB" id="Q05144"/>
    </source>
</evidence>
<evidence type="ECO:0000255" key="4"/>
<evidence type="ECO:0000305" key="5"/>
<name>RAC2_BOVIN</name>
<gene>
    <name evidence="2" type="primary">RAC2</name>
</gene>
<comment type="function">
    <text evidence="2">Plasma membrane-associated small GTPase which cycles between an active GTP-bound and inactive GDP-bound state. In its active state, binds to a variety of effector proteins to regulate cellular responses, such as secretory processes, phagocytose of apoptotic cells and epithelial cell polarization. Regulatory subunit of the phagocyte NADPH oxidase complex that mediates the transfer of electrons from cytosolic NADPH to O2 to produce the superoxide anion (O2(-)).</text>
</comment>
<comment type="catalytic activity">
    <reaction evidence="2">
        <text>GTP + H2O = GDP + phosphate + H(+)</text>
        <dbReference type="Rhea" id="RHEA:19669"/>
        <dbReference type="ChEBI" id="CHEBI:15377"/>
        <dbReference type="ChEBI" id="CHEBI:15378"/>
        <dbReference type="ChEBI" id="CHEBI:37565"/>
        <dbReference type="ChEBI" id="CHEBI:43474"/>
        <dbReference type="ChEBI" id="CHEBI:58189"/>
        <dbReference type="EC" id="3.6.5.2"/>
    </reaction>
    <physiologicalReaction direction="left-to-right" evidence="2">
        <dbReference type="Rhea" id="RHEA:19670"/>
    </physiologicalReaction>
</comment>
<comment type="activity regulation">
    <text evidence="2">Regulated by guanine nucleotide exchange factors (GEFs) which promote the exchange of bound GDP for free GTP, GTPase activating proteins (GAPs) which increase the GTP hydrolysis activity, and GDP dissociation inhibitors which inhibit the dissociation of the nucleotide from the GTPase.</text>
</comment>
<comment type="subunit">
    <text evidence="2 3">Interacts with DOCK2, which may activate it. Interacts with S100A8 and calprotectin (S100A8/9) (By similarity). Found in a complex with SH3RF1, MAP3K7/TAK1, MAP2K7/MKK7, MAPK8IP1/JIP1, MAPK8/JNK1 and MAPK9/JNK2 (By similarity). Interacts with PAK1 (By similarity). Component of the phagocyte NADPH oxidase complex composed of an obligatory core heterodimer formed by the membrane proteins CYBA and CYBB and the cytosolic regulatory subunits NCF1/p47-phox, NCF2/p67-phox, NCF4/p40-phox and the small GTPase RAC1 or RAC2 (By similarity).</text>
</comment>
<comment type="subcellular location">
    <subcellularLocation>
        <location evidence="1">Cytoplasm</location>
    </subcellularLocation>
    <subcellularLocation>
        <location evidence="1">Membrane</location>
        <topology evidence="1">Lipid-anchor</topology>
    </subcellularLocation>
    <text evidence="1">Membrane-associated when activated.</text>
</comment>
<comment type="similarity">
    <text evidence="5">Belongs to the small GTPase superfamily. Rho family.</text>
</comment>